<proteinExistence type="inferred from homology"/>
<comment type="function">
    <text evidence="1">Required for maturation of 30S ribosomal subunits.</text>
</comment>
<comment type="subcellular location">
    <subcellularLocation>
        <location evidence="1">Cytoplasm</location>
    </subcellularLocation>
</comment>
<comment type="similarity">
    <text evidence="1">Belongs to the RimP family.</text>
</comment>
<accession>C6E2Q3</accession>
<keyword id="KW-0963">Cytoplasm</keyword>
<keyword id="KW-0690">Ribosome biogenesis</keyword>
<organism>
    <name type="scientific">Geobacter sp. (strain M21)</name>
    <dbReference type="NCBI Taxonomy" id="443144"/>
    <lineage>
        <taxon>Bacteria</taxon>
        <taxon>Pseudomonadati</taxon>
        <taxon>Thermodesulfobacteriota</taxon>
        <taxon>Desulfuromonadia</taxon>
        <taxon>Geobacterales</taxon>
        <taxon>Geobacteraceae</taxon>
        <taxon>Geobacter</taxon>
    </lineage>
</organism>
<feature type="chain" id="PRO_1000213493" description="Ribosome maturation factor RimP">
    <location>
        <begin position="1"/>
        <end position="160"/>
    </location>
</feature>
<dbReference type="EMBL" id="CP001661">
    <property type="protein sequence ID" value="ACT19013.1"/>
    <property type="molecule type" value="Genomic_DNA"/>
</dbReference>
<dbReference type="SMR" id="C6E2Q3"/>
<dbReference type="STRING" id="443144.GM21_2984"/>
<dbReference type="KEGG" id="gem:GM21_2984"/>
<dbReference type="eggNOG" id="COG0779">
    <property type="taxonomic scope" value="Bacteria"/>
</dbReference>
<dbReference type="HOGENOM" id="CLU_070525_2_2_7"/>
<dbReference type="OrthoDB" id="9805006at2"/>
<dbReference type="GO" id="GO:0005829">
    <property type="term" value="C:cytosol"/>
    <property type="evidence" value="ECO:0007669"/>
    <property type="project" value="TreeGrafter"/>
</dbReference>
<dbReference type="GO" id="GO:0000028">
    <property type="term" value="P:ribosomal small subunit assembly"/>
    <property type="evidence" value="ECO:0007669"/>
    <property type="project" value="TreeGrafter"/>
</dbReference>
<dbReference type="GO" id="GO:0006412">
    <property type="term" value="P:translation"/>
    <property type="evidence" value="ECO:0007669"/>
    <property type="project" value="TreeGrafter"/>
</dbReference>
<dbReference type="CDD" id="cd01734">
    <property type="entry name" value="YlxS_C"/>
    <property type="match status" value="1"/>
</dbReference>
<dbReference type="FunFam" id="3.30.300.70:FF:000001">
    <property type="entry name" value="Ribosome maturation factor RimP"/>
    <property type="match status" value="1"/>
</dbReference>
<dbReference type="Gene3D" id="2.30.30.180">
    <property type="entry name" value="Ribosome maturation factor RimP, C-terminal domain"/>
    <property type="match status" value="1"/>
</dbReference>
<dbReference type="Gene3D" id="3.30.300.70">
    <property type="entry name" value="RimP-like superfamily, N-terminal"/>
    <property type="match status" value="1"/>
</dbReference>
<dbReference type="HAMAP" id="MF_01077">
    <property type="entry name" value="RimP"/>
    <property type="match status" value="1"/>
</dbReference>
<dbReference type="InterPro" id="IPR003728">
    <property type="entry name" value="Ribosome_maturation_RimP"/>
</dbReference>
<dbReference type="InterPro" id="IPR028998">
    <property type="entry name" value="RimP_C"/>
</dbReference>
<dbReference type="InterPro" id="IPR036847">
    <property type="entry name" value="RimP_C_sf"/>
</dbReference>
<dbReference type="InterPro" id="IPR028989">
    <property type="entry name" value="RimP_N"/>
</dbReference>
<dbReference type="InterPro" id="IPR035956">
    <property type="entry name" value="RimP_N_sf"/>
</dbReference>
<dbReference type="NCBIfam" id="NF011241">
    <property type="entry name" value="PRK14647.1"/>
    <property type="match status" value="1"/>
</dbReference>
<dbReference type="PANTHER" id="PTHR33867">
    <property type="entry name" value="RIBOSOME MATURATION FACTOR RIMP"/>
    <property type="match status" value="1"/>
</dbReference>
<dbReference type="PANTHER" id="PTHR33867:SF1">
    <property type="entry name" value="RIBOSOME MATURATION FACTOR RIMP"/>
    <property type="match status" value="1"/>
</dbReference>
<dbReference type="Pfam" id="PF17384">
    <property type="entry name" value="DUF150_C"/>
    <property type="match status" value="1"/>
</dbReference>
<dbReference type="Pfam" id="PF02576">
    <property type="entry name" value="RimP_N"/>
    <property type="match status" value="1"/>
</dbReference>
<dbReference type="SUPFAM" id="SSF74942">
    <property type="entry name" value="YhbC-like, C-terminal domain"/>
    <property type="match status" value="1"/>
</dbReference>
<dbReference type="SUPFAM" id="SSF75420">
    <property type="entry name" value="YhbC-like, N-terminal domain"/>
    <property type="match status" value="1"/>
</dbReference>
<sequence length="160" mass="18006">MAKVDVVERVTEIIAEVGAPLGIELVDLEYKREGRDMVVRVFLEKREGGINLDDCAEVSRQLSDILDVEDFMPERYTLEVSSPGICRPLKKVVDYERFMGHLIKVKTFEMLPDEAGNKRKTFTGKLTGIADGVIGIDLTEGQHARVPLDKVAKAHLEFEF</sequence>
<reference key="1">
    <citation type="submission" date="2009-07" db="EMBL/GenBank/DDBJ databases">
        <title>Complete sequence of Geobacter sp. M21.</title>
        <authorList>
            <consortium name="US DOE Joint Genome Institute"/>
            <person name="Lucas S."/>
            <person name="Copeland A."/>
            <person name="Lapidus A."/>
            <person name="Glavina del Rio T."/>
            <person name="Dalin E."/>
            <person name="Tice H."/>
            <person name="Bruce D."/>
            <person name="Goodwin L."/>
            <person name="Pitluck S."/>
            <person name="Saunders E."/>
            <person name="Brettin T."/>
            <person name="Detter J.C."/>
            <person name="Han C."/>
            <person name="Larimer F."/>
            <person name="Land M."/>
            <person name="Hauser L."/>
            <person name="Kyrpides N."/>
            <person name="Ovchinnikova G."/>
            <person name="Lovley D."/>
        </authorList>
    </citation>
    <scope>NUCLEOTIDE SEQUENCE [LARGE SCALE GENOMIC DNA]</scope>
    <source>
        <strain>M21</strain>
    </source>
</reference>
<protein>
    <recommendedName>
        <fullName evidence="1">Ribosome maturation factor RimP</fullName>
    </recommendedName>
</protein>
<evidence type="ECO:0000255" key="1">
    <source>
        <dbReference type="HAMAP-Rule" id="MF_01077"/>
    </source>
</evidence>
<name>RIMP_GEOSM</name>
<gene>
    <name evidence="1" type="primary">rimP</name>
    <name type="ordered locus">GM21_2984</name>
</gene>